<accession>Q54MQ7</accession>
<gene>
    <name type="primary">dhps</name>
    <name type="ORF">DDB_G0285725</name>
</gene>
<sequence length="376" mass="42544">MSTNTTTTNATPELAKESVFFQSNHEDLKNRPKVRGYDFNEGVDFSKLFETYKTIGYQASAVGEAIDEINRMISWRLVDEPLKEGEDDDEERKVTRCKIFLGYTSNLVSSGVREIIRYLVQHSMVDVIVSTAGGVEEDFIKCLAPTYMGEFHLEGEKLRRKGLNRIGNLLVPNDNYCKFEDWIMPILDQMVEEQKTKGTVWTPSRVINRLGKEINHEDSIYYWAWKNDIPVYSPALTDGSIGDMMYFHSYNTPGLVLDIISDIRAINNHAVYSKKSGMIILGGGVIKHHICNANLFRNGADYSVFVNTGNEFDGSDSGARPDEAVSWGKIKLDAKPVKVYSEASIVFPILVAETFAKTFKKKSPEELKLNKRSIFD</sequence>
<name>DHYS_DICDI</name>
<reference key="1">
    <citation type="journal article" date="2005" name="Nature">
        <title>The genome of the social amoeba Dictyostelium discoideum.</title>
        <authorList>
            <person name="Eichinger L."/>
            <person name="Pachebat J.A."/>
            <person name="Gloeckner G."/>
            <person name="Rajandream M.A."/>
            <person name="Sucgang R."/>
            <person name="Berriman M."/>
            <person name="Song J."/>
            <person name="Olsen R."/>
            <person name="Szafranski K."/>
            <person name="Xu Q."/>
            <person name="Tunggal B."/>
            <person name="Kummerfeld S."/>
            <person name="Madera M."/>
            <person name="Konfortov B.A."/>
            <person name="Rivero F."/>
            <person name="Bankier A.T."/>
            <person name="Lehmann R."/>
            <person name="Hamlin N."/>
            <person name="Davies R."/>
            <person name="Gaudet P."/>
            <person name="Fey P."/>
            <person name="Pilcher K."/>
            <person name="Chen G."/>
            <person name="Saunders D."/>
            <person name="Sodergren E.J."/>
            <person name="Davis P."/>
            <person name="Kerhornou A."/>
            <person name="Nie X."/>
            <person name="Hall N."/>
            <person name="Anjard C."/>
            <person name="Hemphill L."/>
            <person name="Bason N."/>
            <person name="Farbrother P."/>
            <person name="Desany B."/>
            <person name="Just E."/>
            <person name="Morio T."/>
            <person name="Rost R."/>
            <person name="Churcher C.M."/>
            <person name="Cooper J."/>
            <person name="Haydock S."/>
            <person name="van Driessche N."/>
            <person name="Cronin A."/>
            <person name="Goodhead I."/>
            <person name="Muzny D.M."/>
            <person name="Mourier T."/>
            <person name="Pain A."/>
            <person name="Lu M."/>
            <person name="Harper D."/>
            <person name="Lindsay R."/>
            <person name="Hauser H."/>
            <person name="James K.D."/>
            <person name="Quiles M."/>
            <person name="Madan Babu M."/>
            <person name="Saito T."/>
            <person name="Buchrieser C."/>
            <person name="Wardroper A."/>
            <person name="Felder M."/>
            <person name="Thangavelu M."/>
            <person name="Johnson D."/>
            <person name="Knights A."/>
            <person name="Loulseged H."/>
            <person name="Mungall K.L."/>
            <person name="Oliver K."/>
            <person name="Price C."/>
            <person name="Quail M.A."/>
            <person name="Urushihara H."/>
            <person name="Hernandez J."/>
            <person name="Rabbinowitsch E."/>
            <person name="Steffen D."/>
            <person name="Sanders M."/>
            <person name="Ma J."/>
            <person name="Kohara Y."/>
            <person name="Sharp S."/>
            <person name="Simmonds M.N."/>
            <person name="Spiegler S."/>
            <person name="Tivey A."/>
            <person name="Sugano S."/>
            <person name="White B."/>
            <person name="Walker D."/>
            <person name="Woodward J.R."/>
            <person name="Winckler T."/>
            <person name="Tanaka Y."/>
            <person name="Shaulsky G."/>
            <person name="Schleicher M."/>
            <person name="Weinstock G.M."/>
            <person name="Rosenthal A."/>
            <person name="Cox E.C."/>
            <person name="Chisholm R.L."/>
            <person name="Gibbs R.A."/>
            <person name="Loomis W.F."/>
            <person name="Platzer M."/>
            <person name="Kay R.R."/>
            <person name="Williams J.G."/>
            <person name="Dear P.H."/>
            <person name="Noegel A.A."/>
            <person name="Barrell B.G."/>
            <person name="Kuspa A."/>
        </authorList>
    </citation>
    <scope>NUCLEOTIDE SEQUENCE [LARGE SCALE GENOMIC DNA]</scope>
    <source>
        <strain>AX4</strain>
    </source>
</reference>
<organism>
    <name type="scientific">Dictyostelium discoideum</name>
    <name type="common">Social amoeba</name>
    <dbReference type="NCBI Taxonomy" id="44689"/>
    <lineage>
        <taxon>Eukaryota</taxon>
        <taxon>Amoebozoa</taxon>
        <taxon>Evosea</taxon>
        <taxon>Eumycetozoa</taxon>
        <taxon>Dictyostelia</taxon>
        <taxon>Dictyosteliales</taxon>
        <taxon>Dictyosteliaceae</taxon>
        <taxon>Dictyostelium</taxon>
    </lineage>
</organism>
<feature type="chain" id="PRO_0000328109" description="Probable deoxyhypusine synthase">
    <location>
        <begin position="1"/>
        <end position="376"/>
    </location>
</feature>
<feature type="active site" description="Nucleophile" evidence="1">
    <location>
        <position position="329"/>
    </location>
</feature>
<feature type="binding site" evidence="1">
    <location>
        <begin position="105"/>
        <end position="109"/>
    </location>
    <ligand>
        <name>NAD(+)</name>
        <dbReference type="ChEBI" id="CHEBI:57540"/>
    </ligand>
</feature>
<feature type="binding site" evidence="1">
    <location>
        <begin position="131"/>
        <end position="133"/>
    </location>
    <ligand>
        <name>NAD(+)</name>
        <dbReference type="ChEBI" id="CHEBI:57540"/>
    </ligand>
</feature>
<feature type="binding site" evidence="1">
    <location>
        <begin position="136"/>
        <end position="137"/>
    </location>
    <ligand>
        <name>spermidine</name>
        <dbReference type="ChEBI" id="CHEBI:57834"/>
    </ligand>
</feature>
<feature type="binding site" evidence="1">
    <location>
        <position position="137"/>
    </location>
    <ligand>
        <name>NAD(+)</name>
        <dbReference type="ChEBI" id="CHEBI:57540"/>
    </ligand>
</feature>
<feature type="binding site" evidence="1">
    <location>
        <position position="238"/>
    </location>
    <ligand>
        <name>NAD(+)</name>
        <dbReference type="ChEBI" id="CHEBI:57540"/>
    </ligand>
</feature>
<feature type="binding site" evidence="1">
    <location>
        <position position="243"/>
    </location>
    <ligand>
        <name>spermidine</name>
        <dbReference type="ChEBI" id="CHEBI:57834"/>
    </ligand>
</feature>
<feature type="binding site" evidence="1">
    <location>
        <position position="283"/>
    </location>
    <ligand>
        <name>NAD(+)</name>
        <dbReference type="ChEBI" id="CHEBI:57540"/>
    </ligand>
</feature>
<feature type="binding site" evidence="1">
    <location>
        <position position="288"/>
    </location>
    <ligand>
        <name>spermidine</name>
        <dbReference type="ChEBI" id="CHEBI:57834"/>
    </ligand>
</feature>
<feature type="binding site" evidence="1">
    <location>
        <begin position="308"/>
        <end position="309"/>
    </location>
    <ligand>
        <name>NAD(+)</name>
        <dbReference type="ChEBI" id="CHEBI:57540"/>
    </ligand>
</feature>
<feature type="binding site" evidence="1">
    <location>
        <begin position="314"/>
        <end position="316"/>
    </location>
    <ligand>
        <name>spermidine</name>
        <dbReference type="ChEBI" id="CHEBI:57834"/>
    </ligand>
</feature>
<feature type="binding site" evidence="1">
    <location>
        <begin position="323"/>
        <end position="329"/>
    </location>
    <ligand>
        <name>spermidine</name>
        <dbReference type="ChEBI" id="CHEBI:57834"/>
    </ligand>
</feature>
<feature type="binding site" evidence="1">
    <location>
        <begin position="342"/>
        <end position="343"/>
    </location>
    <ligand>
        <name>NAD(+)</name>
        <dbReference type="ChEBI" id="CHEBI:57540"/>
    </ligand>
</feature>
<comment type="function">
    <text evidence="2">Catalyzes the NAD-dependent oxidative cleavage of spermidine and the subsequent transfer of the butylamine moiety of spermidine to the epsilon-amino group of a critical lysine residue of the eIF-5A precursor protein to form the intermediate deoxyhypusine residue. This is the first step of the post-translational modification of that lysine into an unusual amino acid residue named hypusine. Hypusination is unique to mature eIF-5A factor and is essential for its function.</text>
</comment>
<comment type="catalytic activity">
    <reaction>
        <text>[eIF5A protein]-L-lysine + spermidine = [eIF5A protein]-deoxyhypusine + propane-1,3-diamine</text>
        <dbReference type="Rhea" id="RHEA:33299"/>
        <dbReference type="Rhea" id="RHEA-COMP:10143"/>
        <dbReference type="Rhea" id="RHEA-COMP:10144"/>
        <dbReference type="ChEBI" id="CHEBI:29969"/>
        <dbReference type="ChEBI" id="CHEBI:57484"/>
        <dbReference type="ChEBI" id="CHEBI:57834"/>
        <dbReference type="ChEBI" id="CHEBI:82657"/>
        <dbReference type="EC" id="2.5.1.46"/>
    </reaction>
</comment>
<comment type="cofactor">
    <cofactor evidence="1">
        <name>NAD(+)</name>
        <dbReference type="ChEBI" id="CHEBI:57540"/>
    </cofactor>
</comment>
<comment type="pathway">
    <text>Protein modification; eIF5A hypusination.</text>
</comment>
<comment type="similarity">
    <text evidence="3">Belongs to the deoxyhypusine synthase family.</text>
</comment>
<evidence type="ECO:0000250" key="1"/>
<evidence type="ECO:0000250" key="2">
    <source>
        <dbReference type="UniProtKB" id="P49366"/>
    </source>
</evidence>
<evidence type="ECO:0000305" key="3"/>
<dbReference type="EC" id="2.5.1.46"/>
<dbReference type="EMBL" id="AAFI02000079">
    <property type="protein sequence ID" value="EAL64700.1"/>
    <property type="molecule type" value="Genomic_DNA"/>
</dbReference>
<dbReference type="RefSeq" id="XP_638236.1">
    <property type="nucleotide sequence ID" value="XM_633144.1"/>
</dbReference>
<dbReference type="SMR" id="Q54MQ7"/>
<dbReference type="FunCoup" id="Q54MQ7">
    <property type="interactions" value="668"/>
</dbReference>
<dbReference type="STRING" id="44689.Q54MQ7"/>
<dbReference type="PaxDb" id="44689-DDB0266388"/>
<dbReference type="EnsemblProtists" id="EAL64700">
    <property type="protein sequence ID" value="EAL64700"/>
    <property type="gene ID" value="DDB_G0285725"/>
</dbReference>
<dbReference type="GeneID" id="8625284"/>
<dbReference type="KEGG" id="ddi:DDB_G0285725"/>
<dbReference type="dictyBase" id="DDB_G0285725">
    <property type="gene designation" value="dhps"/>
</dbReference>
<dbReference type="VEuPathDB" id="AmoebaDB:DDB_G0285725"/>
<dbReference type="eggNOG" id="KOG2924">
    <property type="taxonomic scope" value="Eukaryota"/>
</dbReference>
<dbReference type="HOGENOM" id="CLU_039781_0_0_1"/>
<dbReference type="InParanoid" id="Q54MQ7"/>
<dbReference type="OMA" id="HSIINAN"/>
<dbReference type="PhylomeDB" id="Q54MQ7"/>
<dbReference type="Reactome" id="R-DDI-204626">
    <property type="pathway name" value="Hypusine synthesis from eIF5A-lysine"/>
</dbReference>
<dbReference type="UniPathway" id="UPA00354"/>
<dbReference type="PRO" id="PR:Q54MQ7"/>
<dbReference type="Proteomes" id="UP000002195">
    <property type="component" value="Chromosome 4"/>
</dbReference>
<dbReference type="GO" id="GO:0005737">
    <property type="term" value="C:cytoplasm"/>
    <property type="evidence" value="ECO:0000318"/>
    <property type="project" value="GO_Central"/>
</dbReference>
<dbReference type="GO" id="GO:0034038">
    <property type="term" value="F:deoxyhypusine synthase activity"/>
    <property type="evidence" value="ECO:0000318"/>
    <property type="project" value="GO_Central"/>
</dbReference>
<dbReference type="GO" id="GO:0008216">
    <property type="term" value="P:spermidine metabolic process"/>
    <property type="evidence" value="ECO:0000318"/>
    <property type="project" value="GO_Central"/>
</dbReference>
<dbReference type="FunFam" id="3.40.910.10:FF:000001">
    <property type="entry name" value="Probable deoxyhypusine synthase"/>
    <property type="match status" value="1"/>
</dbReference>
<dbReference type="Gene3D" id="3.40.910.10">
    <property type="entry name" value="Deoxyhypusine synthase"/>
    <property type="match status" value="1"/>
</dbReference>
<dbReference type="InterPro" id="IPR002773">
    <property type="entry name" value="Deoxyhypusine_synthase"/>
</dbReference>
<dbReference type="InterPro" id="IPR036982">
    <property type="entry name" value="Deoxyhypusine_synthase_sf"/>
</dbReference>
<dbReference type="InterPro" id="IPR029035">
    <property type="entry name" value="DHS-like_NAD/FAD-binding_dom"/>
</dbReference>
<dbReference type="NCBIfam" id="TIGR00321">
    <property type="entry name" value="dhys"/>
    <property type="match status" value="1"/>
</dbReference>
<dbReference type="PANTHER" id="PTHR11703">
    <property type="entry name" value="DEOXYHYPUSINE SYNTHASE"/>
    <property type="match status" value="1"/>
</dbReference>
<dbReference type="PANTHER" id="PTHR11703:SF0">
    <property type="entry name" value="DEOXYHYPUSINE SYNTHASE"/>
    <property type="match status" value="1"/>
</dbReference>
<dbReference type="Pfam" id="PF01916">
    <property type="entry name" value="DS"/>
    <property type="match status" value="1"/>
</dbReference>
<dbReference type="SUPFAM" id="SSF52467">
    <property type="entry name" value="DHS-like NAD/FAD-binding domain"/>
    <property type="match status" value="1"/>
</dbReference>
<keyword id="KW-0386">Hypusine biosynthesis</keyword>
<keyword id="KW-0520">NAD</keyword>
<keyword id="KW-1185">Reference proteome</keyword>
<keyword id="KW-0808">Transferase</keyword>
<protein>
    <recommendedName>
        <fullName>Probable deoxyhypusine synthase</fullName>
        <shortName>DHS</shortName>
        <ecNumber>2.5.1.46</ecNumber>
    </recommendedName>
</protein>
<proteinExistence type="inferred from homology"/>